<gene>
    <name evidence="1" type="primary">def2</name>
    <name type="ordered locus">gll2228</name>
</gene>
<keyword id="KW-0378">Hydrolase</keyword>
<keyword id="KW-0408">Iron</keyword>
<keyword id="KW-0479">Metal-binding</keyword>
<keyword id="KW-0648">Protein biosynthesis</keyword>
<keyword id="KW-1185">Reference proteome</keyword>
<proteinExistence type="inferred from homology"/>
<evidence type="ECO:0000255" key="1">
    <source>
        <dbReference type="HAMAP-Rule" id="MF_00163"/>
    </source>
</evidence>
<dbReference type="EC" id="3.5.1.88" evidence="1"/>
<dbReference type="EMBL" id="BA000045">
    <property type="protein sequence ID" value="BAC90169.1"/>
    <property type="molecule type" value="Genomic_DNA"/>
</dbReference>
<dbReference type="RefSeq" id="NP_925174.1">
    <property type="nucleotide sequence ID" value="NC_005125.1"/>
</dbReference>
<dbReference type="RefSeq" id="WP_011142225.1">
    <property type="nucleotide sequence ID" value="NC_005125.1"/>
</dbReference>
<dbReference type="SMR" id="Q7NIF5"/>
<dbReference type="FunCoup" id="Q7NIF5">
    <property type="interactions" value="191"/>
</dbReference>
<dbReference type="STRING" id="251221.gene:10759723"/>
<dbReference type="EnsemblBacteria" id="BAC90169">
    <property type="protein sequence ID" value="BAC90169"/>
    <property type="gene ID" value="BAC90169"/>
</dbReference>
<dbReference type="KEGG" id="gvi:gll2228"/>
<dbReference type="PATRIC" id="fig|251221.4.peg.2260"/>
<dbReference type="eggNOG" id="COG0242">
    <property type="taxonomic scope" value="Bacteria"/>
</dbReference>
<dbReference type="HOGENOM" id="CLU_061901_4_2_3"/>
<dbReference type="InParanoid" id="Q7NIF5"/>
<dbReference type="OrthoDB" id="9784988at2"/>
<dbReference type="PhylomeDB" id="Q7NIF5"/>
<dbReference type="Proteomes" id="UP000000557">
    <property type="component" value="Chromosome"/>
</dbReference>
<dbReference type="GO" id="GO:0046872">
    <property type="term" value="F:metal ion binding"/>
    <property type="evidence" value="ECO:0007669"/>
    <property type="project" value="UniProtKB-KW"/>
</dbReference>
<dbReference type="GO" id="GO:0042586">
    <property type="term" value="F:peptide deformylase activity"/>
    <property type="evidence" value="ECO:0000318"/>
    <property type="project" value="GO_Central"/>
</dbReference>
<dbReference type="GO" id="GO:0043686">
    <property type="term" value="P:co-translational protein modification"/>
    <property type="evidence" value="ECO:0000318"/>
    <property type="project" value="GO_Central"/>
</dbReference>
<dbReference type="GO" id="GO:0006412">
    <property type="term" value="P:translation"/>
    <property type="evidence" value="ECO:0007669"/>
    <property type="project" value="UniProtKB-UniRule"/>
</dbReference>
<dbReference type="CDD" id="cd00487">
    <property type="entry name" value="Pep_deformylase"/>
    <property type="match status" value="1"/>
</dbReference>
<dbReference type="FunFam" id="3.90.45.10:FF:000005">
    <property type="entry name" value="Peptide deformylase"/>
    <property type="match status" value="1"/>
</dbReference>
<dbReference type="Gene3D" id="3.90.45.10">
    <property type="entry name" value="Peptide deformylase"/>
    <property type="match status" value="1"/>
</dbReference>
<dbReference type="HAMAP" id="MF_00163">
    <property type="entry name" value="Pep_deformylase"/>
    <property type="match status" value="1"/>
</dbReference>
<dbReference type="InterPro" id="IPR023635">
    <property type="entry name" value="Peptide_deformylase"/>
</dbReference>
<dbReference type="InterPro" id="IPR036821">
    <property type="entry name" value="Peptide_deformylase_sf"/>
</dbReference>
<dbReference type="NCBIfam" id="TIGR00079">
    <property type="entry name" value="pept_deformyl"/>
    <property type="match status" value="1"/>
</dbReference>
<dbReference type="NCBIfam" id="NF001159">
    <property type="entry name" value="PRK00150.1-3"/>
    <property type="match status" value="1"/>
</dbReference>
<dbReference type="PANTHER" id="PTHR10458">
    <property type="entry name" value="PEPTIDE DEFORMYLASE"/>
    <property type="match status" value="1"/>
</dbReference>
<dbReference type="PANTHER" id="PTHR10458:SF22">
    <property type="entry name" value="PEPTIDE DEFORMYLASE"/>
    <property type="match status" value="1"/>
</dbReference>
<dbReference type="Pfam" id="PF01327">
    <property type="entry name" value="Pep_deformylase"/>
    <property type="match status" value="1"/>
</dbReference>
<dbReference type="PIRSF" id="PIRSF004749">
    <property type="entry name" value="Pep_def"/>
    <property type="match status" value="1"/>
</dbReference>
<dbReference type="PRINTS" id="PR01576">
    <property type="entry name" value="PDEFORMYLASE"/>
</dbReference>
<dbReference type="SUPFAM" id="SSF56420">
    <property type="entry name" value="Peptide deformylase"/>
    <property type="match status" value="1"/>
</dbReference>
<feature type="chain" id="PRO_0000082786" description="Peptide deformylase 2">
    <location>
        <begin position="1"/>
        <end position="187"/>
    </location>
</feature>
<feature type="active site" evidence="1">
    <location>
        <position position="150"/>
    </location>
</feature>
<feature type="binding site" evidence="1">
    <location>
        <position position="107"/>
    </location>
    <ligand>
        <name>Fe cation</name>
        <dbReference type="ChEBI" id="CHEBI:24875"/>
    </ligand>
</feature>
<feature type="binding site" evidence="1">
    <location>
        <position position="149"/>
    </location>
    <ligand>
        <name>Fe cation</name>
        <dbReference type="ChEBI" id="CHEBI:24875"/>
    </ligand>
</feature>
<feature type="binding site" evidence="1">
    <location>
        <position position="153"/>
    </location>
    <ligand>
        <name>Fe cation</name>
        <dbReference type="ChEBI" id="CHEBI:24875"/>
    </ligand>
</feature>
<organism>
    <name type="scientific">Gloeobacter violaceus (strain ATCC 29082 / PCC 7421)</name>
    <dbReference type="NCBI Taxonomy" id="251221"/>
    <lineage>
        <taxon>Bacteria</taxon>
        <taxon>Bacillati</taxon>
        <taxon>Cyanobacteriota</taxon>
        <taxon>Cyanophyceae</taxon>
        <taxon>Gloeobacterales</taxon>
        <taxon>Gloeobacteraceae</taxon>
        <taxon>Gloeobacter</taxon>
    </lineage>
</organism>
<sequence length="187" mass="20557">MANQLQVPKQKLAKPPLAIHTLGDRVLRQGSKQISGINDEVRKLAQQMLQTMYSADGIGLAAPQVGVNKRMIVVDIDPENAARPPLVLINPLIKQFSSDLAVDQEGCLSVPSIYADVRRPERVVATYRDLNGRPVTLEATGLLARCIQHEIDHLDGVLFVDRVENQIALAPQLVEKGFAVRDVQVRA</sequence>
<comment type="function">
    <text evidence="1">Removes the formyl group from the N-terminal Met of newly synthesized proteins. Requires at least a dipeptide for an efficient rate of reaction. N-terminal L-methionine is a prerequisite for activity but the enzyme has broad specificity at other positions.</text>
</comment>
<comment type="catalytic activity">
    <reaction evidence="1">
        <text>N-terminal N-formyl-L-methionyl-[peptide] + H2O = N-terminal L-methionyl-[peptide] + formate</text>
        <dbReference type="Rhea" id="RHEA:24420"/>
        <dbReference type="Rhea" id="RHEA-COMP:10639"/>
        <dbReference type="Rhea" id="RHEA-COMP:10640"/>
        <dbReference type="ChEBI" id="CHEBI:15377"/>
        <dbReference type="ChEBI" id="CHEBI:15740"/>
        <dbReference type="ChEBI" id="CHEBI:49298"/>
        <dbReference type="ChEBI" id="CHEBI:64731"/>
        <dbReference type="EC" id="3.5.1.88"/>
    </reaction>
</comment>
<comment type="cofactor">
    <cofactor evidence="1">
        <name>Fe(2+)</name>
        <dbReference type="ChEBI" id="CHEBI:29033"/>
    </cofactor>
    <text evidence="1">Binds 1 Fe(2+) ion.</text>
</comment>
<comment type="similarity">
    <text evidence="1">Belongs to the polypeptide deformylase family.</text>
</comment>
<reference key="1">
    <citation type="journal article" date="2003" name="DNA Res.">
        <title>Complete genome structure of Gloeobacter violaceus PCC 7421, a cyanobacterium that lacks thylakoids.</title>
        <authorList>
            <person name="Nakamura Y."/>
            <person name="Kaneko T."/>
            <person name="Sato S."/>
            <person name="Mimuro M."/>
            <person name="Miyashita H."/>
            <person name="Tsuchiya T."/>
            <person name="Sasamoto S."/>
            <person name="Watanabe A."/>
            <person name="Kawashima K."/>
            <person name="Kishida Y."/>
            <person name="Kiyokawa C."/>
            <person name="Kohara M."/>
            <person name="Matsumoto M."/>
            <person name="Matsuno A."/>
            <person name="Nakazaki N."/>
            <person name="Shimpo S."/>
            <person name="Takeuchi C."/>
            <person name="Yamada M."/>
            <person name="Tabata S."/>
        </authorList>
    </citation>
    <scope>NUCLEOTIDE SEQUENCE [LARGE SCALE GENOMIC DNA]</scope>
    <source>
        <strain>ATCC 29082 / PCC 7421</strain>
    </source>
</reference>
<accession>Q7NIF5</accession>
<protein>
    <recommendedName>
        <fullName evidence="1">Peptide deformylase 2</fullName>
        <shortName evidence="1">PDF 2</shortName>
        <ecNumber evidence="1">3.5.1.88</ecNumber>
    </recommendedName>
    <alternativeName>
        <fullName evidence="1">Polypeptide deformylase 2</fullName>
    </alternativeName>
</protein>
<name>DEF2_GLOVI</name>